<evidence type="ECO:0000250" key="1"/>
<evidence type="ECO:0000255" key="2"/>
<evidence type="ECO:0000269" key="3">
    <source>
    </source>
</evidence>
<evidence type="ECO:0000305" key="4"/>
<evidence type="ECO:0000305" key="5">
    <source>
    </source>
</evidence>
<accession>P56711</accession>
<accession>Q9BPA8</accession>
<reference key="1">
    <citation type="journal article" date="2001" name="Mol. Biol. Evol.">
        <title>Mechanisms for evolving hypervariability: the case of conopeptides.</title>
        <authorList>
            <person name="Conticello S.G."/>
            <person name="Gilad Y."/>
            <person name="Avidan N."/>
            <person name="Ben-Asher E."/>
            <person name="Levy Z."/>
            <person name="Fainzilber M."/>
        </authorList>
    </citation>
    <scope>NUCLEOTIDE SEQUENCE [MRNA]</scope>
</reference>
<reference key="2">
    <citation type="journal article" date="1998" name="Biochemistry">
        <title>Gamma-conotoxin-PnVIIA, a gamma-carboxyglutamate-containing peptide agonist of neuronal pacemaker cation currents.</title>
        <authorList>
            <person name="Fainzilber M."/>
            <person name="Nakamura T."/>
            <person name="Lodder J.C."/>
            <person name="Zlotkin E."/>
            <person name="Kits K.S."/>
            <person name="Burlingame A.L."/>
        </authorList>
    </citation>
    <scope>PROTEIN SEQUENCE OF 46-77</scope>
    <scope>FUNCTION</scope>
    <scope>HYDROXYLATION AT PRO-76</scope>
    <scope>GAMMA-CARBOXYGLUTAMATION AT GLU-59 AND GLU-71</scope>
    <scope>SUBCELLULAR LOCATION</scope>
    <scope>MASS SPECTROMETRY</scope>
    <source>
        <tissue>Venom</tissue>
    </source>
</reference>
<proteinExistence type="evidence at protein level"/>
<dbReference type="EMBL" id="AF215029">
    <property type="protein sequence ID" value="AAG60457.1"/>
    <property type="molecule type" value="mRNA"/>
</dbReference>
<dbReference type="SMR" id="P56711"/>
<dbReference type="TCDB" id="8.B.16.2.1">
    <property type="family name" value="the maurocalcine (maca) family"/>
</dbReference>
<dbReference type="ConoServer" id="1636">
    <property type="toxin name" value="PnVIIA"/>
</dbReference>
<dbReference type="ConoServer" id="716">
    <property type="toxin name" value="PnVIIA precursor"/>
</dbReference>
<dbReference type="GO" id="GO:0005576">
    <property type="term" value="C:extracellular region"/>
    <property type="evidence" value="ECO:0007669"/>
    <property type="project" value="UniProtKB-SubCell"/>
</dbReference>
<dbReference type="GO" id="GO:0008200">
    <property type="term" value="F:ion channel inhibitor activity"/>
    <property type="evidence" value="ECO:0007669"/>
    <property type="project" value="InterPro"/>
</dbReference>
<dbReference type="GO" id="GO:0090729">
    <property type="term" value="F:toxin activity"/>
    <property type="evidence" value="ECO:0007669"/>
    <property type="project" value="UniProtKB-KW"/>
</dbReference>
<dbReference type="InterPro" id="IPR004214">
    <property type="entry name" value="Conotoxin"/>
</dbReference>
<dbReference type="Pfam" id="PF02950">
    <property type="entry name" value="Conotoxin"/>
    <property type="match status" value="1"/>
</dbReference>
<feature type="signal peptide" evidence="2">
    <location>
        <begin position="1"/>
        <end position="19"/>
    </location>
</feature>
<feature type="propeptide" id="PRO_0000392707" evidence="5">
    <location>
        <begin position="20"/>
        <end position="43"/>
    </location>
</feature>
<feature type="peptide" id="PRO_0000044877" description="Gamma-conotoxin PnVIIA" evidence="3">
    <location>
        <begin position="46"/>
        <end position="77"/>
    </location>
</feature>
<feature type="propeptide" id="PRO_0000392708" evidence="5">
    <location>
        <begin position="78"/>
        <end position="80"/>
    </location>
</feature>
<feature type="modified residue" description="4-carboxyglutamate" evidence="3">
    <location>
        <position position="59"/>
    </location>
</feature>
<feature type="modified residue" description="4-carboxyglutamate" evidence="3">
    <location>
        <position position="71"/>
    </location>
</feature>
<feature type="modified residue" description="4-hydroxyproline" evidence="3">
    <location>
        <position position="76"/>
    </location>
</feature>
<feature type="disulfide bond" evidence="1">
    <location>
        <begin position="47"/>
        <end position="61"/>
    </location>
</feature>
<feature type="disulfide bond" evidence="1">
    <location>
        <begin position="54"/>
        <end position="65"/>
    </location>
</feature>
<feature type="disulfide bond" evidence="1">
    <location>
        <begin position="60"/>
        <end position="70"/>
    </location>
</feature>
<organism>
    <name type="scientific">Conus pennaceus</name>
    <name type="common">Feathered cone</name>
    <name type="synonym">Conus episcopus</name>
    <dbReference type="NCBI Taxonomy" id="37335"/>
    <lineage>
        <taxon>Eukaryota</taxon>
        <taxon>Metazoa</taxon>
        <taxon>Spiralia</taxon>
        <taxon>Lophotrochozoa</taxon>
        <taxon>Mollusca</taxon>
        <taxon>Gastropoda</taxon>
        <taxon>Caenogastropoda</taxon>
        <taxon>Neogastropoda</taxon>
        <taxon>Conoidea</taxon>
        <taxon>Conidae</taxon>
        <taxon>Conus</taxon>
        <taxon>Darioconus</taxon>
    </lineage>
</organism>
<protein>
    <recommendedName>
        <fullName>Gamma-conotoxin PnVIIA</fullName>
    </recommendedName>
    <alternativeName>
        <fullName>PnMEKL-011</fullName>
    </alternativeName>
</protein>
<sequence>MEKLTILLLVAAVLMSTQAQNQEQRQQAKINFLSKRKPSAERWRRDCTSWFGRCTVNSECCSNSCDQTYCELYAFPSFGA</sequence>
<keyword id="KW-0165">Cleavage on pair of basic residues</keyword>
<keyword id="KW-0903">Direct protein sequencing</keyword>
<keyword id="KW-1015">Disulfide bond</keyword>
<keyword id="KW-0301">Gamma-carboxyglutamic acid</keyword>
<keyword id="KW-0379">Hydroxylation</keyword>
<keyword id="KW-0872">Ion channel impairing toxin</keyword>
<keyword id="KW-0960">Knottin</keyword>
<keyword id="KW-0528">Neurotoxin</keyword>
<keyword id="KW-0964">Secreted</keyword>
<keyword id="KW-0732">Signal</keyword>
<keyword id="KW-0800">Toxin</keyword>
<name>O27A_CONPE</name>
<comment type="function">
    <text evidence="3">Gamma-conotoxins may act on voltage-gated non-specific cation pacemaker channels (HCN). Triggers depolarization and firing of action potential bursts in the caudodorsal neurons of lymnaea. This effect is due to activation or enhancement of a slow inward cation current that may underlie endogenous bursting activity of these neurons.</text>
</comment>
<comment type="subcellular location">
    <subcellularLocation>
        <location evidence="3">Secreted</location>
    </subcellularLocation>
</comment>
<comment type="tissue specificity">
    <text evidence="5">Expressed by the venom duct.</text>
</comment>
<comment type="domain">
    <text evidence="4">The presence of a 'disulfide through disulfide knot' structurally defines this protein as a knottin.</text>
</comment>
<comment type="domain">
    <text evidence="4">The cysteine framework is VI/VII (C-C-CC-C-C).</text>
</comment>
<comment type="mass spectrometry"/>
<comment type="similarity">
    <text evidence="4">Belongs to the conotoxin O2 superfamily.</text>
</comment>